<protein>
    <recommendedName>
        <fullName evidence="1">UPF0276 protein AM1_3026</fullName>
    </recommendedName>
</protein>
<name>Y3026_ACAM1</name>
<evidence type="ECO:0000255" key="1">
    <source>
        <dbReference type="HAMAP-Rule" id="MF_00697"/>
    </source>
</evidence>
<proteinExistence type="inferred from homology"/>
<reference key="1">
    <citation type="journal article" date="2008" name="Proc. Natl. Acad. Sci. U.S.A.">
        <title>Niche adaptation and genome expansion in the chlorophyll d-producing cyanobacterium Acaryochloris marina.</title>
        <authorList>
            <person name="Swingley W.D."/>
            <person name="Chen M."/>
            <person name="Cheung P.C."/>
            <person name="Conrad A.L."/>
            <person name="Dejesa L.C."/>
            <person name="Hao J."/>
            <person name="Honchak B.M."/>
            <person name="Karbach L.E."/>
            <person name="Kurdoglu A."/>
            <person name="Lahiri S."/>
            <person name="Mastrian S.D."/>
            <person name="Miyashita H."/>
            <person name="Page L."/>
            <person name="Ramakrishna P."/>
            <person name="Satoh S."/>
            <person name="Sattley W.M."/>
            <person name="Shimada Y."/>
            <person name="Taylor H.L."/>
            <person name="Tomo T."/>
            <person name="Tsuchiya T."/>
            <person name="Wang Z.T."/>
            <person name="Raymond J."/>
            <person name="Mimuro M."/>
            <person name="Blankenship R.E."/>
            <person name="Touchman J.W."/>
        </authorList>
    </citation>
    <scope>NUCLEOTIDE SEQUENCE [LARGE SCALE GENOMIC DNA]</scope>
    <source>
        <strain>MBIC 11017</strain>
    </source>
</reference>
<organism>
    <name type="scientific">Acaryochloris marina (strain MBIC 11017)</name>
    <dbReference type="NCBI Taxonomy" id="329726"/>
    <lineage>
        <taxon>Bacteria</taxon>
        <taxon>Bacillati</taxon>
        <taxon>Cyanobacteriota</taxon>
        <taxon>Cyanophyceae</taxon>
        <taxon>Acaryochloridales</taxon>
        <taxon>Acaryochloridaceae</taxon>
        <taxon>Acaryochloris</taxon>
    </lineage>
</organism>
<comment type="similarity">
    <text evidence="1">Belongs to the UPF0276 family.</text>
</comment>
<gene>
    <name type="ordered locus">AM1_3026</name>
</gene>
<sequence length="276" mass="31385">MVAMTAIQGAGIGLRSQHYAHILTHQPAIPWLEALSDNYLGGGLPLYHLEQIRAQYPITLHGVSLSLGSADPLNMDYLTQLKQLADRIEPVHVSDHLAWVSVNGHYFNDLAPLPYTESVLHYVADRISQVQEFLGRRILIENLSPYLQFRHNSLTEWQFLAALLVEADCHLLLDINNVYVNATNHGFDPLDYLDALPVDRIKEIHLAGYEEQDHFLFDTHGYPVQPGVWTLYQQALQRFGPVPTLIEWDTDIPSFDVLMAEAQQADTYLCQHRPQN</sequence>
<accession>B0CCJ3</accession>
<keyword id="KW-1185">Reference proteome</keyword>
<dbReference type="EMBL" id="CP000828">
    <property type="protein sequence ID" value="ABW28022.1"/>
    <property type="molecule type" value="Genomic_DNA"/>
</dbReference>
<dbReference type="RefSeq" id="WP_012163453.1">
    <property type="nucleotide sequence ID" value="NC_009925.1"/>
</dbReference>
<dbReference type="SMR" id="B0CCJ3"/>
<dbReference type="STRING" id="329726.AM1_3026"/>
<dbReference type="KEGG" id="amr:AM1_3026"/>
<dbReference type="eggNOG" id="COG3220">
    <property type="taxonomic scope" value="Bacteria"/>
</dbReference>
<dbReference type="HOGENOM" id="CLU_064263_0_0_3"/>
<dbReference type="OrthoDB" id="9763101at2"/>
<dbReference type="Proteomes" id="UP000000268">
    <property type="component" value="Chromosome"/>
</dbReference>
<dbReference type="Gene3D" id="3.20.20.150">
    <property type="entry name" value="Divalent-metal-dependent TIM barrel enzymes"/>
    <property type="match status" value="1"/>
</dbReference>
<dbReference type="HAMAP" id="MF_00697">
    <property type="entry name" value="UPF0276"/>
    <property type="match status" value="1"/>
</dbReference>
<dbReference type="InterPro" id="IPR007801">
    <property type="entry name" value="MbnB/TglH/ChrH"/>
</dbReference>
<dbReference type="InterPro" id="IPR036237">
    <property type="entry name" value="Xyl_isomerase-like_sf"/>
</dbReference>
<dbReference type="NCBIfam" id="NF003818">
    <property type="entry name" value="PRK05409.1"/>
    <property type="match status" value="1"/>
</dbReference>
<dbReference type="PANTHER" id="PTHR42194">
    <property type="entry name" value="UPF0276 PROTEIN HI_1600"/>
    <property type="match status" value="1"/>
</dbReference>
<dbReference type="PANTHER" id="PTHR42194:SF1">
    <property type="entry name" value="UPF0276 PROTEIN HI_1600"/>
    <property type="match status" value="1"/>
</dbReference>
<dbReference type="Pfam" id="PF05114">
    <property type="entry name" value="MbnB_TglH_ChrH"/>
    <property type="match status" value="1"/>
</dbReference>
<dbReference type="SUPFAM" id="SSF51658">
    <property type="entry name" value="Xylose isomerase-like"/>
    <property type="match status" value="1"/>
</dbReference>
<feature type="chain" id="PRO_1000083190" description="UPF0276 protein AM1_3026">
    <location>
        <begin position="1"/>
        <end position="276"/>
    </location>
</feature>